<sequence>MPKHGKKYTEMSKKIDKQARYDFNEALELSLASSYVKFDETVDIAVRLGVDPRHADQMVRGTVALPNGLGKEVKVLVFAKGEKEKEALDAGADFIADEETVAKIKDGWFGFDKAIATPDMMGTVGKLGRVLGPRGLMPNAKTGTVTFDVAKAVEELKAGKIDFRVEKAGIIHVPVGKVSFGPEKLVENVKAFINMIIALKPASSKGTYLKTITVSTTMGPGVKIDPMFTK</sequence>
<keyword id="KW-1185">Reference proteome</keyword>
<keyword id="KW-0678">Repressor</keyword>
<keyword id="KW-0687">Ribonucleoprotein</keyword>
<keyword id="KW-0689">Ribosomal protein</keyword>
<keyword id="KW-0694">RNA-binding</keyword>
<keyword id="KW-0699">rRNA-binding</keyword>
<keyword id="KW-0810">Translation regulation</keyword>
<keyword id="KW-0820">tRNA-binding</keyword>
<accession>C0Q9Y2</accession>
<organism>
    <name type="scientific">Desulforapulum autotrophicum (strain ATCC 43914 / DSM 3382 / VKM B-1955 / HRM2)</name>
    <name type="common">Desulfobacterium autotrophicum</name>
    <dbReference type="NCBI Taxonomy" id="177437"/>
    <lineage>
        <taxon>Bacteria</taxon>
        <taxon>Pseudomonadati</taxon>
        <taxon>Thermodesulfobacteriota</taxon>
        <taxon>Desulfobacteria</taxon>
        <taxon>Desulfobacterales</taxon>
        <taxon>Desulfobacteraceae</taxon>
        <taxon>Desulforapulum</taxon>
    </lineage>
</organism>
<dbReference type="EMBL" id="CP001087">
    <property type="protein sequence ID" value="ACN16700.1"/>
    <property type="molecule type" value="Genomic_DNA"/>
</dbReference>
<dbReference type="RefSeq" id="WP_015905450.1">
    <property type="nucleotide sequence ID" value="NC_012108.1"/>
</dbReference>
<dbReference type="SMR" id="C0Q9Y2"/>
<dbReference type="STRING" id="177437.HRM2_36350"/>
<dbReference type="KEGG" id="dat:HRM2_36350"/>
<dbReference type="eggNOG" id="COG0081">
    <property type="taxonomic scope" value="Bacteria"/>
</dbReference>
<dbReference type="HOGENOM" id="CLU_062853_0_0_7"/>
<dbReference type="OrthoDB" id="9803740at2"/>
<dbReference type="Proteomes" id="UP000000442">
    <property type="component" value="Chromosome"/>
</dbReference>
<dbReference type="GO" id="GO:0015934">
    <property type="term" value="C:large ribosomal subunit"/>
    <property type="evidence" value="ECO:0007669"/>
    <property type="project" value="InterPro"/>
</dbReference>
<dbReference type="GO" id="GO:0019843">
    <property type="term" value="F:rRNA binding"/>
    <property type="evidence" value="ECO:0007669"/>
    <property type="project" value="UniProtKB-UniRule"/>
</dbReference>
<dbReference type="GO" id="GO:0003735">
    <property type="term" value="F:structural constituent of ribosome"/>
    <property type="evidence" value="ECO:0007669"/>
    <property type="project" value="InterPro"/>
</dbReference>
<dbReference type="GO" id="GO:0000049">
    <property type="term" value="F:tRNA binding"/>
    <property type="evidence" value="ECO:0007669"/>
    <property type="project" value="UniProtKB-KW"/>
</dbReference>
<dbReference type="GO" id="GO:0006417">
    <property type="term" value="P:regulation of translation"/>
    <property type="evidence" value="ECO:0007669"/>
    <property type="project" value="UniProtKB-KW"/>
</dbReference>
<dbReference type="GO" id="GO:0006412">
    <property type="term" value="P:translation"/>
    <property type="evidence" value="ECO:0007669"/>
    <property type="project" value="UniProtKB-UniRule"/>
</dbReference>
<dbReference type="CDD" id="cd00403">
    <property type="entry name" value="Ribosomal_L1"/>
    <property type="match status" value="1"/>
</dbReference>
<dbReference type="FunFam" id="3.40.50.790:FF:000001">
    <property type="entry name" value="50S ribosomal protein L1"/>
    <property type="match status" value="1"/>
</dbReference>
<dbReference type="Gene3D" id="3.30.190.20">
    <property type="match status" value="1"/>
</dbReference>
<dbReference type="Gene3D" id="3.40.50.790">
    <property type="match status" value="1"/>
</dbReference>
<dbReference type="HAMAP" id="MF_01318_B">
    <property type="entry name" value="Ribosomal_uL1_B"/>
    <property type="match status" value="1"/>
</dbReference>
<dbReference type="InterPro" id="IPR005878">
    <property type="entry name" value="Ribosom_uL1_bac-type"/>
</dbReference>
<dbReference type="InterPro" id="IPR002143">
    <property type="entry name" value="Ribosomal_uL1"/>
</dbReference>
<dbReference type="InterPro" id="IPR023674">
    <property type="entry name" value="Ribosomal_uL1-like"/>
</dbReference>
<dbReference type="InterPro" id="IPR028364">
    <property type="entry name" value="Ribosomal_uL1/biogenesis"/>
</dbReference>
<dbReference type="InterPro" id="IPR016095">
    <property type="entry name" value="Ribosomal_uL1_3-a/b-sand"/>
</dbReference>
<dbReference type="InterPro" id="IPR023673">
    <property type="entry name" value="Ribosomal_uL1_CS"/>
</dbReference>
<dbReference type="NCBIfam" id="TIGR01169">
    <property type="entry name" value="rplA_bact"/>
    <property type="match status" value="1"/>
</dbReference>
<dbReference type="PANTHER" id="PTHR36427">
    <property type="entry name" value="54S RIBOSOMAL PROTEIN L1, MITOCHONDRIAL"/>
    <property type="match status" value="1"/>
</dbReference>
<dbReference type="PANTHER" id="PTHR36427:SF3">
    <property type="entry name" value="LARGE RIBOSOMAL SUBUNIT PROTEIN UL1M"/>
    <property type="match status" value="1"/>
</dbReference>
<dbReference type="Pfam" id="PF00687">
    <property type="entry name" value="Ribosomal_L1"/>
    <property type="match status" value="1"/>
</dbReference>
<dbReference type="PIRSF" id="PIRSF002155">
    <property type="entry name" value="Ribosomal_L1"/>
    <property type="match status" value="1"/>
</dbReference>
<dbReference type="SUPFAM" id="SSF56808">
    <property type="entry name" value="Ribosomal protein L1"/>
    <property type="match status" value="1"/>
</dbReference>
<dbReference type="PROSITE" id="PS01199">
    <property type="entry name" value="RIBOSOMAL_L1"/>
    <property type="match status" value="1"/>
</dbReference>
<reference key="1">
    <citation type="journal article" date="2009" name="Environ. Microbiol.">
        <title>Genome sequence of Desulfobacterium autotrophicum HRM2, a marine sulfate reducer oxidizing organic carbon completely to carbon dioxide.</title>
        <authorList>
            <person name="Strittmatter A.W."/>
            <person name="Liesegang H."/>
            <person name="Rabus R."/>
            <person name="Decker I."/>
            <person name="Amann J."/>
            <person name="Andres S."/>
            <person name="Henne A."/>
            <person name="Fricke W.F."/>
            <person name="Martinez-Arias R."/>
            <person name="Bartels D."/>
            <person name="Goesmann A."/>
            <person name="Krause L."/>
            <person name="Puehler A."/>
            <person name="Klenk H.P."/>
            <person name="Richter M."/>
            <person name="Schuler M."/>
            <person name="Gloeckner F.O."/>
            <person name="Meyerdierks A."/>
            <person name="Gottschalk G."/>
            <person name="Amann R."/>
        </authorList>
    </citation>
    <scope>NUCLEOTIDE SEQUENCE [LARGE SCALE GENOMIC DNA]</scope>
    <source>
        <strain>ATCC 43914 / DSM 3382 / VKM B-1955 / HRM2</strain>
    </source>
</reference>
<name>RL1_DESAH</name>
<gene>
    <name evidence="1" type="primary">rplA</name>
    <name type="ordered locus">HRM2_36350</name>
</gene>
<comment type="function">
    <text evidence="1">Binds directly to 23S rRNA. The L1 stalk is quite mobile in the ribosome, and is involved in E site tRNA release.</text>
</comment>
<comment type="function">
    <text evidence="1">Protein L1 is also a translational repressor protein, it controls the translation of the L11 operon by binding to its mRNA.</text>
</comment>
<comment type="subunit">
    <text evidence="1">Part of the 50S ribosomal subunit.</text>
</comment>
<comment type="similarity">
    <text evidence="1">Belongs to the universal ribosomal protein uL1 family.</text>
</comment>
<feature type="chain" id="PRO_1000214417" description="Large ribosomal subunit protein uL1">
    <location>
        <begin position="1"/>
        <end position="230"/>
    </location>
</feature>
<proteinExistence type="inferred from homology"/>
<protein>
    <recommendedName>
        <fullName evidence="1">Large ribosomal subunit protein uL1</fullName>
    </recommendedName>
    <alternativeName>
        <fullName evidence="2">50S ribosomal protein L1</fullName>
    </alternativeName>
</protein>
<evidence type="ECO:0000255" key="1">
    <source>
        <dbReference type="HAMAP-Rule" id="MF_01318"/>
    </source>
</evidence>
<evidence type="ECO:0000305" key="2"/>